<proteinExistence type="inferred from homology"/>
<protein>
    <recommendedName>
        <fullName evidence="1">Nucleoside diphosphate kinase</fullName>
        <shortName evidence="1">NDK</shortName>
        <shortName evidence="1">NDP kinase</shortName>
        <ecNumber evidence="1">2.7.4.6</ecNumber>
    </recommendedName>
    <alternativeName>
        <fullName evidence="1">Nucleoside-2-P kinase</fullName>
    </alternativeName>
</protein>
<sequence>MTVERTFSIIKPNAVKKNAIGAIYARFESAGFKIIAAKMLHLTREQAEGFYAEHKGRPFFDGLVEFMTSGPIVVQVLEGENAVQRHRDLMGATNPDNALAGTLRADYADSFTENAVHGSDAVESANREIAYFFTEDEICPR</sequence>
<keyword id="KW-0067">ATP-binding</keyword>
<keyword id="KW-0963">Cytoplasm</keyword>
<keyword id="KW-0418">Kinase</keyword>
<keyword id="KW-0460">Magnesium</keyword>
<keyword id="KW-0479">Metal-binding</keyword>
<keyword id="KW-0546">Nucleotide metabolism</keyword>
<keyword id="KW-0547">Nucleotide-binding</keyword>
<keyword id="KW-0597">Phosphoprotein</keyword>
<keyword id="KW-1185">Reference proteome</keyword>
<keyword id="KW-0808">Transferase</keyword>
<evidence type="ECO:0000255" key="1">
    <source>
        <dbReference type="HAMAP-Rule" id="MF_00451"/>
    </source>
</evidence>
<name>NDK_PHOLL</name>
<gene>
    <name evidence="1" type="primary">ndk</name>
    <name type="ordered locus">plu1372</name>
</gene>
<comment type="function">
    <text evidence="1">Major role in the synthesis of nucleoside triphosphates other than ATP. The ATP gamma phosphate is transferred to the NDP beta phosphate via a ping-pong mechanism, using a phosphorylated active-site intermediate.</text>
</comment>
<comment type="catalytic activity">
    <reaction evidence="1">
        <text>a 2'-deoxyribonucleoside 5'-diphosphate + ATP = a 2'-deoxyribonucleoside 5'-triphosphate + ADP</text>
        <dbReference type="Rhea" id="RHEA:44640"/>
        <dbReference type="ChEBI" id="CHEBI:30616"/>
        <dbReference type="ChEBI" id="CHEBI:61560"/>
        <dbReference type="ChEBI" id="CHEBI:73316"/>
        <dbReference type="ChEBI" id="CHEBI:456216"/>
        <dbReference type="EC" id="2.7.4.6"/>
    </reaction>
</comment>
<comment type="catalytic activity">
    <reaction evidence="1">
        <text>a ribonucleoside 5'-diphosphate + ATP = a ribonucleoside 5'-triphosphate + ADP</text>
        <dbReference type="Rhea" id="RHEA:18113"/>
        <dbReference type="ChEBI" id="CHEBI:30616"/>
        <dbReference type="ChEBI" id="CHEBI:57930"/>
        <dbReference type="ChEBI" id="CHEBI:61557"/>
        <dbReference type="ChEBI" id="CHEBI:456216"/>
        <dbReference type="EC" id="2.7.4.6"/>
    </reaction>
</comment>
<comment type="cofactor">
    <cofactor evidence="1">
        <name>Mg(2+)</name>
        <dbReference type="ChEBI" id="CHEBI:18420"/>
    </cofactor>
</comment>
<comment type="subunit">
    <text evidence="1">Homotetramer.</text>
</comment>
<comment type="subcellular location">
    <subcellularLocation>
        <location evidence="1">Cytoplasm</location>
    </subcellularLocation>
</comment>
<comment type="similarity">
    <text evidence="1">Belongs to the NDK family.</text>
</comment>
<feature type="chain" id="PRO_0000137018" description="Nucleoside diphosphate kinase">
    <location>
        <begin position="1"/>
        <end position="141"/>
    </location>
</feature>
<feature type="active site" description="Pros-phosphohistidine intermediate" evidence="1">
    <location>
        <position position="117"/>
    </location>
</feature>
<feature type="binding site" evidence="1">
    <location>
        <position position="11"/>
    </location>
    <ligand>
        <name>ATP</name>
        <dbReference type="ChEBI" id="CHEBI:30616"/>
    </ligand>
</feature>
<feature type="binding site" evidence="1">
    <location>
        <position position="59"/>
    </location>
    <ligand>
        <name>ATP</name>
        <dbReference type="ChEBI" id="CHEBI:30616"/>
    </ligand>
</feature>
<feature type="binding site" evidence="1">
    <location>
        <position position="87"/>
    </location>
    <ligand>
        <name>ATP</name>
        <dbReference type="ChEBI" id="CHEBI:30616"/>
    </ligand>
</feature>
<feature type="binding site" evidence="1">
    <location>
        <position position="93"/>
    </location>
    <ligand>
        <name>ATP</name>
        <dbReference type="ChEBI" id="CHEBI:30616"/>
    </ligand>
</feature>
<feature type="binding site" evidence="1">
    <location>
        <position position="104"/>
    </location>
    <ligand>
        <name>ATP</name>
        <dbReference type="ChEBI" id="CHEBI:30616"/>
    </ligand>
</feature>
<feature type="binding site" evidence="1">
    <location>
        <position position="114"/>
    </location>
    <ligand>
        <name>ATP</name>
        <dbReference type="ChEBI" id="CHEBI:30616"/>
    </ligand>
</feature>
<organism>
    <name type="scientific">Photorhabdus laumondii subsp. laumondii (strain DSM 15139 / CIP 105565 / TT01)</name>
    <name type="common">Photorhabdus luminescens subsp. laumondii</name>
    <dbReference type="NCBI Taxonomy" id="243265"/>
    <lineage>
        <taxon>Bacteria</taxon>
        <taxon>Pseudomonadati</taxon>
        <taxon>Pseudomonadota</taxon>
        <taxon>Gammaproteobacteria</taxon>
        <taxon>Enterobacterales</taxon>
        <taxon>Morganellaceae</taxon>
        <taxon>Photorhabdus</taxon>
    </lineage>
</organism>
<reference key="1">
    <citation type="journal article" date="2003" name="Nat. Biotechnol.">
        <title>The genome sequence of the entomopathogenic bacterium Photorhabdus luminescens.</title>
        <authorList>
            <person name="Duchaud E."/>
            <person name="Rusniok C."/>
            <person name="Frangeul L."/>
            <person name="Buchrieser C."/>
            <person name="Givaudan A."/>
            <person name="Taourit S."/>
            <person name="Bocs S."/>
            <person name="Boursaux-Eude C."/>
            <person name="Chandler M."/>
            <person name="Charles J.-F."/>
            <person name="Dassa E."/>
            <person name="Derose R."/>
            <person name="Derzelle S."/>
            <person name="Freyssinet G."/>
            <person name="Gaudriault S."/>
            <person name="Medigue C."/>
            <person name="Lanois A."/>
            <person name="Powell K."/>
            <person name="Siguier P."/>
            <person name="Vincent R."/>
            <person name="Wingate V."/>
            <person name="Zouine M."/>
            <person name="Glaser P."/>
            <person name="Boemare N."/>
            <person name="Danchin A."/>
            <person name="Kunst F."/>
        </authorList>
    </citation>
    <scope>NUCLEOTIDE SEQUENCE [LARGE SCALE GENOMIC DNA]</scope>
    <source>
        <strain>DSM 15139 / CIP 105565 / TT01</strain>
    </source>
</reference>
<dbReference type="EC" id="2.7.4.6" evidence="1"/>
<dbReference type="EMBL" id="BX571863">
    <property type="protein sequence ID" value="CAE13665.1"/>
    <property type="molecule type" value="Genomic_DNA"/>
</dbReference>
<dbReference type="RefSeq" id="WP_011145680.1">
    <property type="nucleotide sequence ID" value="NC_005126.1"/>
</dbReference>
<dbReference type="SMR" id="Q7N710"/>
<dbReference type="STRING" id="243265.plu1372"/>
<dbReference type="GeneID" id="48847651"/>
<dbReference type="KEGG" id="plu:plu1372"/>
<dbReference type="eggNOG" id="COG0105">
    <property type="taxonomic scope" value="Bacteria"/>
</dbReference>
<dbReference type="HOGENOM" id="CLU_060216_8_1_6"/>
<dbReference type="OrthoDB" id="9801161at2"/>
<dbReference type="Proteomes" id="UP000002514">
    <property type="component" value="Chromosome"/>
</dbReference>
<dbReference type="GO" id="GO:0005737">
    <property type="term" value="C:cytoplasm"/>
    <property type="evidence" value="ECO:0007669"/>
    <property type="project" value="UniProtKB-SubCell"/>
</dbReference>
<dbReference type="GO" id="GO:0005524">
    <property type="term" value="F:ATP binding"/>
    <property type="evidence" value="ECO:0007669"/>
    <property type="project" value="UniProtKB-UniRule"/>
</dbReference>
<dbReference type="GO" id="GO:0046872">
    <property type="term" value="F:metal ion binding"/>
    <property type="evidence" value="ECO:0007669"/>
    <property type="project" value="UniProtKB-KW"/>
</dbReference>
<dbReference type="GO" id="GO:0004550">
    <property type="term" value="F:nucleoside diphosphate kinase activity"/>
    <property type="evidence" value="ECO:0007669"/>
    <property type="project" value="UniProtKB-UniRule"/>
</dbReference>
<dbReference type="GO" id="GO:0006241">
    <property type="term" value="P:CTP biosynthetic process"/>
    <property type="evidence" value="ECO:0007669"/>
    <property type="project" value="UniProtKB-UniRule"/>
</dbReference>
<dbReference type="GO" id="GO:0006183">
    <property type="term" value="P:GTP biosynthetic process"/>
    <property type="evidence" value="ECO:0007669"/>
    <property type="project" value="UniProtKB-UniRule"/>
</dbReference>
<dbReference type="GO" id="GO:0006228">
    <property type="term" value="P:UTP biosynthetic process"/>
    <property type="evidence" value="ECO:0007669"/>
    <property type="project" value="UniProtKB-UniRule"/>
</dbReference>
<dbReference type="CDD" id="cd04413">
    <property type="entry name" value="NDPk_I"/>
    <property type="match status" value="1"/>
</dbReference>
<dbReference type="FunFam" id="3.30.70.141:FF:000001">
    <property type="entry name" value="Nucleoside diphosphate kinase"/>
    <property type="match status" value="1"/>
</dbReference>
<dbReference type="Gene3D" id="3.30.70.141">
    <property type="entry name" value="Nucleoside diphosphate kinase-like domain"/>
    <property type="match status" value="1"/>
</dbReference>
<dbReference type="HAMAP" id="MF_00451">
    <property type="entry name" value="NDP_kinase"/>
    <property type="match status" value="1"/>
</dbReference>
<dbReference type="InterPro" id="IPR034907">
    <property type="entry name" value="NDK-like_dom"/>
</dbReference>
<dbReference type="InterPro" id="IPR036850">
    <property type="entry name" value="NDK-like_dom_sf"/>
</dbReference>
<dbReference type="InterPro" id="IPR001564">
    <property type="entry name" value="Nucleoside_diP_kinase"/>
</dbReference>
<dbReference type="InterPro" id="IPR023005">
    <property type="entry name" value="Nucleoside_diP_kinase_AS"/>
</dbReference>
<dbReference type="NCBIfam" id="NF001908">
    <property type="entry name" value="PRK00668.1"/>
    <property type="match status" value="1"/>
</dbReference>
<dbReference type="PANTHER" id="PTHR46161">
    <property type="entry name" value="NUCLEOSIDE DIPHOSPHATE KINASE"/>
    <property type="match status" value="1"/>
</dbReference>
<dbReference type="PANTHER" id="PTHR46161:SF3">
    <property type="entry name" value="NUCLEOSIDE DIPHOSPHATE KINASE DDB_G0292928-RELATED"/>
    <property type="match status" value="1"/>
</dbReference>
<dbReference type="Pfam" id="PF00334">
    <property type="entry name" value="NDK"/>
    <property type="match status" value="1"/>
</dbReference>
<dbReference type="PRINTS" id="PR01243">
    <property type="entry name" value="NUCDPKINASE"/>
</dbReference>
<dbReference type="SMART" id="SM00562">
    <property type="entry name" value="NDK"/>
    <property type="match status" value="1"/>
</dbReference>
<dbReference type="SUPFAM" id="SSF54919">
    <property type="entry name" value="Nucleoside diphosphate kinase, NDK"/>
    <property type="match status" value="1"/>
</dbReference>
<dbReference type="PROSITE" id="PS00469">
    <property type="entry name" value="NDPK"/>
    <property type="match status" value="1"/>
</dbReference>
<dbReference type="PROSITE" id="PS51374">
    <property type="entry name" value="NDPK_LIKE"/>
    <property type="match status" value="1"/>
</dbReference>
<accession>Q7N710</accession>